<dbReference type="EMBL" id="CP000284">
    <property type="protein sequence ID" value="ABE49376.1"/>
    <property type="molecule type" value="Genomic_DNA"/>
</dbReference>
<dbReference type="RefSeq" id="WP_011479330.1">
    <property type="nucleotide sequence ID" value="NC_007947.1"/>
</dbReference>
<dbReference type="SMR" id="Q1H2B1"/>
<dbReference type="STRING" id="265072.Mfla_1108"/>
<dbReference type="KEGG" id="mfa:Mfla_1108"/>
<dbReference type="eggNOG" id="COG1281">
    <property type="taxonomic scope" value="Bacteria"/>
</dbReference>
<dbReference type="HOGENOM" id="CLU_054493_0_0_4"/>
<dbReference type="OrthoDB" id="9793753at2"/>
<dbReference type="Proteomes" id="UP000002440">
    <property type="component" value="Chromosome"/>
</dbReference>
<dbReference type="GO" id="GO:0005737">
    <property type="term" value="C:cytoplasm"/>
    <property type="evidence" value="ECO:0007669"/>
    <property type="project" value="UniProtKB-SubCell"/>
</dbReference>
<dbReference type="GO" id="GO:0044183">
    <property type="term" value="F:protein folding chaperone"/>
    <property type="evidence" value="ECO:0007669"/>
    <property type="project" value="TreeGrafter"/>
</dbReference>
<dbReference type="GO" id="GO:0051082">
    <property type="term" value="F:unfolded protein binding"/>
    <property type="evidence" value="ECO:0007669"/>
    <property type="project" value="UniProtKB-UniRule"/>
</dbReference>
<dbReference type="GO" id="GO:0042026">
    <property type="term" value="P:protein refolding"/>
    <property type="evidence" value="ECO:0007669"/>
    <property type="project" value="TreeGrafter"/>
</dbReference>
<dbReference type="CDD" id="cd00498">
    <property type="entry name" value="Hsp33"/>
    <property type="match status" value="1"/>
</dbReference>
<dbReference type="Gene3D" id="1.10.287.480">
    <property type="entry name" value="helix hairpin bin"/>
    <property type="match status" value="1"/>
</dbReference>
<dbReference type="Gene3D" id="3.55.30.10">
    <property type="entry name" value="Hsp33 domain"/>
    <property type="match status" value="1"/>
</dbReference>
<dbReference type="Gene3D" id="3.90.1280.10">
    <property type="entry name" value="HSP33 redox switch-like"/>
    <property type="match status" value="1"/>
</dbReference>
<dbReference type="HAMAP" id="MF_00117">
    <property type="entry name" value="HslO"/>
    <property type="match status" value="1"/>
</dbReference>
<dbReference type="InterPro" id="IPR000397">
    <property type="entry name" value="Heat_shock_Hsp33"/>
</dbReference>
<dbReference type="InterPro" id="IPR016154">
    <property type="entry name" value="Heat_shock_Hsp33_C"/>
</dbReference>
<dbReference type="InterPro" id="IPR016153">
    <property type="entry name" value="Heat_shock_Hsp33_N"/>
</dbReference>
<dbReference type="InterPro" id="IPR023212">
    <property type="entry name" value="Hsp33_helix_hairpin_bin_dom_sf"/>
</dbReference>
<dbReference type="NCBIfam" id="NF001033">
    <property type="entry name" value="PRK00114.1"/>
    <property type="match status" value="1"/>
</dbReference>
<dbReference type="PANTHER" id="PTHR30111">
    <property type="entry name" value="33 KDA CHAPERONIN"/>
    <property type="match status" value="1"/>
</dbReference>
<dbReference type="PANTHER" id="PTHR30111:SF1">
    <property type="entry name" value="33 KDA CHAPERONIN"/>
    <property type="match status" value="1"/>
</dbReference>
<dbReference type="Pfam" id="PF01430">
    <property type="entry name" value="HSP33"/>
    <property type="match status" value="1"/>
</dbReference>
<dbReference type="PIRSF" id="PIRSF005261">
    <property type="entry name" value="Heat_shock_Hsp33"/>
    <property type="match status" value="1"/>
</dbReference>
<dbReference type="SUPFAM" id="SSF64397">
    <property type="entry name" value="Hsp33 domain"/>
    <property type="match status" value="1"/>
</dbReference>
<dbReference type="SUPFAM" id="SSF118352">
    <property type="entry name" value="HSP33 redox switch-like"/>
    <property type="match status" value="1"/>
</dbReference>
<reference key="1">
    <citation type="submission" date="2006-03" db="EMBL/GenBank/DDBJ databases">
        <title>Complete sequence of Methylobacillus flagellatus KT.</title>
        <authorList>
            <consortium name="US DOE Joint Genome Institute"/>
            <person name="Copeland A."/>
            <person name="Lucas S."/>
            <person name="Lapidus A."/>
            <person name="Barry K."/>
            <person name="Detter J.C."/>
            <person name="Glavina del Rio T."/>
            <person name="Hammon N."/>
            <person name="Israni S."/>
            <person name="Dalin E."/>
            <person name="Tice H."/>
            <person name="Pitluck S."/>
            <person name="Brettin T."/>
            <person name="Bruce D."/>
            <person name="Han C."/>
            <person name="Tapia R."/>
            <person name="Saunders E."/>
            <person name="Gilna P."/>
            <person name="Schmutz J."/>
            <person name="Larimer F."/>
            <person name="Land M."/>
            <person name="Kyrpides N."/>
            <person name="Anderson I."/>
            <person name="Richardson P."/>
        </authorList>
    </citation>
    <scope>NUCLEOTIDE SEQUENCE [LARGE SCALE GENOMIC DNA]</scope>
    <source>
        <strain>ATCC 51484 / DSM 6875 / VKM B-1610 / KT</strain>
    </source>
</reference>
<evidence type="ECO:0000255" key="1">
    <source>
        <dbReference type="HAMAP-Rule" id="MF_00117"/>
    </source>
</evidence>
<comment type="function">
    <text evidence="1">Redox regulated molecular chaperone. Protects both thermally unfolding and oxidatively damaged proteins from irreversible aggregation. Plays an important role in the bacterial defense system toward oxidative stress.</text>
</comment>
<comment type="subcellular location">
    <subcellularLocation>
        <location evidence="1">Cytoplasm</location>
    </subcellularLocation>
</comment>
<comment type="PTM">
    <text evidence="1">Under oxidizing conditions two disulfide bonds are formed involving the reactive cysteines. Under reducing conditions zinc is bound to the reactive cysteines and the protein is inactive.</text>
</comment>
<comment type="similarity">
    <text evidence="1">Belongs to the HSP33 family.</text>
</comment>
<gene>
    <name evidence="1" type="primary">hslO</name>
    <name type="ordered locus">Mfla_1108</name>
</gene>
<proteinExistence type="inferred from homology"/>
<organism>
    <name type="scientific">Methylobacillus flagellatus (strain ATCC 51484 / DSM 6875 / VKM B-1610 / KT)</name>
    <dbReference type="NCBI Taxonomy" id="265072"/>
    <lineage>
        <taxon>Bacteria</taxon>
        <taxon>Pseudomonadati</taxon>
        <taxon>Pseudomonadota</taxon>
        <taxon>Betaproteobacteria</taxon>
        <taxon>Nitrosomonadales</taxon>
        <taxon>Methylophilaceae</taxon>
        <taxon>Methylobacillus</taxon>
    </lineage>
</organism>
<name>HSLO_METFK</name>
<accession>Q1H2B1</accession>
<feature type="chain" id="PRO_1000015552" description="33 kDa chaperonin">
    <location>
        <begin position="1"/>
        <end position="293"/>
    </location>
</feature>
<feature type="disulfide bond" description="Redox-active" evidence="1">
    <location>
        <begin position="229"/>
        <end position="231"/>
    </location>
</feature>
<feature type="disulfide bond" description="Redox-active" evidence="1">
    <location>
        <begin position="262"/>
        <end position="265"/>
    </location>
</feature>
<sequence>MQISDHLHRFLFENTPVRGSIVHLDDSFQQSLQHHDFPQILRQALGELMAASALLAATLKLKGGALVLQVQGKGPLKLLVVECTSDLGIRATAKWSGELDGMSFSDMVSNGHFVITLDPRDGGQPYQGIVPVEGGSIAEILQSYMQRSEQIDTRMWLACDGKRAAGMLVQKMPDQPDAADPDAWNRIIMLADTVRDEELLDLSAVSLIKRLFNEEDVRLFKEQPIKFHCGCSRESVGNMLRMLGEEEVADILAEQHTIDINCDFCNAEYHFDEVDAEQLFTTEIVMPGNDVRH</sequence>
<protein>
    <recommendedName>
        <fullName evidence="1">33 kDa chaperonin</fullName>
    </recommendedName>
    <alternativeName>
        <fullName evidence="1">Heat shock protein 33 homolog</fullName>
        <shortName evidence="1">HSP33</shortName>
    </alternativeName>
</protein>
<keyword id="KW-0143">Chaperone</keyword>
<keyword id="KW-0963">Cytoplasm</keyword>
<keyword id="KW-1015">Disulfide bond</keyword>
<keyword id="KW-0676">Redox-active center</keyword>
<keyword id="KW-1185">Reference proteome</keyword>
<keyword id="KW-0862">Zinc</keyword>